<proteinExistence type="evidence at protein level"/>
<keyword id="KW-0002">3D-structure</keyword>
<keyword id="KW-0963">Cytoplasm</keyword>
<keyword id="KW-0456">Lyase</keyword>
<keyword id="KW-1185">Reference proteome</keyword>
<keyword id="KW-0816">Tricarboxylic acid cycle</keyword>
<accession>Q9ZCQ4</accession>
<name>FUMC_RICPR</name>
<comment type="function">
    <text evidence="1">Involved in the TCA cycle. Catalyzes the stereospecific interconversion of fumarate to L-malate.</text>
</comment>
<comment type="catalytic activity">
    <reaction evidence="1">
        <text>(S)-malate = fumarate + H2O</text>
        <dbReference type="Rhea" id="RHEA:12460"/>
        <dbReference type="ChEBI" id="CHEBI:15377"/>
        <dbReference type="ChEBI" id="CHEBI:15589"/>
        <dbReference type="ChEBI" id="CHEBI:29806"/>
        <dbReference type="EC" id="4.2.1.2"/>
    </reaction>
</comment>
<comment type="pathway">
    <text evidence="1">Carbohydrate metabolism; tricarboxylic acid cycle; (S)-malate from fumarate: step 1/1.</text>
</comment>
<comment type="subunit">
    <text evidence="1 2">Homotetramer.</text>
</comment>
<comment type="subcellular location">
    <subcellularLocation>
        <location evidence="1">Cytoplasm</location>
    </subcellularLocation>
</comment>
<comment type="miscellaneous">
    <text evidence="1">There are 2 substrate-binding sites: the catalytic A site, and the non-catalytic B site that may play a role in the transfer of substrate or product between the active site and the solvent. Alternatively, the B site may bind allosteric effectors.</text>
</comment>
<comment type="similarity">
    <text evidence="1 4">Belongs to the class-II fumarase/aspartase family. Fumarase subfamily.</text>
</comment>
<reference key="1">
    <citation type="journal article" date="1998" name="Nature">
        <title>The genome sequence of Rickettsia prowazekii and the origin of mitochondria.</title>
        <authorList>
            <person name="Andersson S.G.E."/>
            <person name="Zomorodipour A."/>
            <person name="Andersson J.O."/>
            <person name="Sicheritz-Ponten T."/>
            <person name="Alsmark U.C.M."/>
            <person name="Podowski R.M."/>
            <person name="Naeslund A.K."/>
            <person name="Eriksson A.-S."/>
            <person name="Winkler H.H."/>
            <person name="Kurland C.G."/>
        </authorList>
    </citation>
    <scope>NUCLEOTIDE SEQUENCE [LARGE SCALE GENOMIC DNA]</scope>
    <source>
        <strain>Madrid E</strain>
    </source>
</reference>
<reference key="2">
    <citation type="journal article" date="2011" name="Acta Crystallogr. F">
        <title>Structure of fumarate hydratase from Rickettsia prowazekii, the agent of typhus and suspected relative of the mitochondria.</title>
        <authorList>
            <person name="Phan I."/>
            <person name="Subramanian S."/>
            <person name="Olsen C."/>
            <person name="Edwards T.E."/>
            <person name="Guo W."/>
            <person name="Zhang Y."/>
            <person name="Van Voorhis W.C."/>
            <person name="Stewart L.J."/>
            <person name="Myler P.J."/>
        </authorList>
    </citation>
    <scope>X-RAY CRYSTALLOGRAPHY (2.4 ANGSTROMS) IN COMPLEX WITH SUBSTRATE ANALOGS</scope>
    <scope>SUBUNIT</scope>
</reference>
<organism>
    <name type="scientific">Rickettsia prowazekii (strain Madrid E)</name>
    <dbReference type="NCBI Taxonomy" id="272947"/>
    <lineage>
        <taxon>Bacteria</taxon>
        <taxon>Pseudomonadati</taxon>
        <taxon>Pseudomonadota</taxon>
        <taxon>Alphaproteobacteria</taxon>
        <taxon>Rickettsiales</taxon>
        <taxon>Rickettsiaceae</taxon>
        <taxon>Rickettsieae</taxon>
        <taxon>Rickettsia</taxon>
        <taxon>typhus group</taxon>
    </lineage>
</organism>
<sequence>MKNYRIESDSFGEIQIEEKFYWGAQTQRSLNNFKISKQKMPKILIRALAILKKCAAQVNYEFGDLEYKIATSIDKAIDRILAGEFEDNFPLVVWQTGSGTQTNMNMNEVIASIANEELTGKKGGKFPVHPNDHVNKGQSSNDSFPTAMHIATVLATKQQLIPALNNLLTYLQDKSKDWDKIIKIGRTHLQDATPLTLKQEFSGYITQIEYALERIEDALKKVYLLAQGGTAVGTGINSKIGFDIKFAQKVAEFTQQPFKTAPNKFESLAAHDALVEFSGTLNTIAVSLMKIANDIRLLGSGPRCGLGELHLPENEPGSSIMPGKVNPTQVEALTMVCTQVMGNHVTVTIAGSNGHLELNVFKPVIIYNILQSIELLSDSVNSFVTHCVKGLEPNIARINTLRDKSLMLVTVLNPHIGYDNAAKIAKEAHKYGITLKEAAKKLNFLSEEEFDKIVVPEKMIS</sequence>
<evidence type="ECO:0000255" key="1">
    <source>
        <dbReference type="HAMAP-Rule" id="MF_00743"/>
    </source>
</evidence>
<evidence type="ECO:0000269" key="2">
    <source>
    </source>
</evidence>
<evidence type="ECO:0000303" key="3">
    <source>
    </source>
</evidence>
<evidence type="ECO:0000305" key="4"/>
<evidence type="ECO:0000305" key="5">
    <source>
    </source>
</evidence>
<evidence type="ECO:0007744" key="6">
    <source>
        <dbReference type="PDB" id="3GTD"/>
    </source>
</evidence>
<evidence type="ECO:0007829" key="7">
    <source>
        <dbReference type="PDB" id="3GTD"/>
    </source>
</evidence>
<protein>
    <recommendedName>
        <fullName evidence="1 3">Fumarate hydratase class II</fullName>
        <shortName evidence="1 3">Fumarase C</shortName>
        <ecNumber evidence="1">4.2.1.2</ecNumber>
    </recommendedName>
    <alternativeName>
        <fullName evidence="1">Aerobic fumarase</fullName>
    </alternativeName>
    <alternativeName>
        <fullName evidence="1">Iron-independent fumarase</fullName>
    </alternativeName>
</protein>
<feature type="chain" id="PRO_0000161307" description="Fumarate hydratase class II">
    <location>
        <begin position="1"/>
        <end position="461"/>
    </location>
</feature>
<feature type="active site" description="Proton donor/acceptor" evidence="1">
    <location>
        <position position="188"/>
    </location>
</feature>
<feature type="active site" evidence="1">
    <location>
        <position position="318"/>
    </location>
</feature>
<feature type="binding site" evidence="1 2 6">
    <location>
        <begin position="98"/>
        <end position="100"/>
    </location>
    <ligand>
        <name>substrate</name>
    </ligand>
</feature>
<feature type="binding site" description="in site B" evidence="1">
    <location>
        <begin position="129"/>
        <end position="132"/>
    </location>
    <ligand>
        <name>substrate</name>
    </ligand>
</feature>
<feature type="binding site" evidence="1 5 6">
    <location>
        <begin position="139"/>
        <end position="141"/>
    </location>
    <ligand>
        <name>substrate</name>
    </ligand>
</feature>
<feature type="binding site" evidence="1">
    <location>
        <position position="187"/>
    </location>
    <ligand>
        <name>substrate</name>
    </ligand>
</feature>
<feature type="binding site" evidence="1">
    <location>
        <position position="319"/>
    </location>
    <ligand>
        <name>substrate</name>
    </ligand>
</feature>
<feature type="binding site" evidence="1 2 6">
    <location>
        <begin position="324"/>
        <end position="326"/>
    </location>
    <ligand>
        <name>substrate</name>
    </ligand>
</feature>
<feature type="site" description="Important for catalytic activity" evidence="1">
    <location>
        <position position="331"/>
    </location>
</feature>
<feature type="strand" evidence="7">
    <location>
        <begin position="4"/>
        <end position="9"/>
    </location>
</feature>
<feature type="strand" evidence="7">
    <location>
        <begin position="12"/>
        <end position="17"/>
    </location>
</feature>
<feature type="helix" evidence="7">
    <location>
        <begin position="24"/>
        <end position="32"/>
    </location>
</feature>
<feature type="helix" evidence="7">
    <location>
        <begin position="42"/>
        <end position="61"/>
    </location>
</feature>
<feature type="helix" evidence="7">
    <location>
        <begin position="67"/>
        <end position="82"/>
    </location>
</feature>
<feature type="turn" evidence="7">
    <location>
        <begin position="83"/>
        <end position="87"/>
    </location>
</feature>
<feature type="strand" evidence="7">
    <location>
        <begin position="92"/>
        <end position="95"/>
    </location>
</feature>
<feature type="helix" evidence="7">
    <location>
        <begin position="100"/>
        <end position="119"/>
    </location>
</feature>
<feature type="strand" evidence="7">
    <location>
        <begin position="124"/>
        <end position="128"/>
    </location>
</feature>
<feature type="helix" evidence="7">
    <location>
        <begin position="130"/>
        <end position="134"/>
    </location>
</feature>
<feature type="turn" evidence="7">
    <location>
        <begin position="135"/>
        <end position="137"/>
    </location>
</feature>
<feature type="helix" evidence="7">
    <location>
        <begin position="140"/>
        <end position="158"/>
    </location>
</feature>
<feature type="helix" evidence="7">
    <location>
        <begin position="160"/>
        <end position="175"/>
    </location>
</feature>
<feature type="helix" evidence="7">
    <location>
        <begin position="178"/>
        <end position="180"/>
    </location>
</feature>
<feature type="strand" evidence="7">
    <location>
        <begin position="182"/>
        <end position="187"/>
    </location>
</feature>
<feature type="strand" evidence="7">
    <location>
        <begin position="190"/>
        <end position="196"/>
    </location>
</feature>
<feature type="helix" evidence="7">
    <location>
        <begin position="197"/>
        <end position="219"/>
    </location>
</feature>
<feature type="turn" evidence="7">
    <location>
        <begin position="220"/>
        <end position="223"/>
    </location>
</feature>
<feature type="turn" evidence="7">
    <location>
        <begin position="230"/>
        <end position="232"/>
    </location>
</feature>
<feature type="helix" evidence="7">
    <location>
        <begin position="242"/>
        <end position="254"/>
    </location>
</feature>
<feature type="helix" evidence="7">
    <location>
        <begin position="264"/>
        <end position="269"/>
    </location>
</feature>
<feature type="helix" evidence="7">
    <location>
        <begin position="272"/>
        <end position="298"/>
    </location>
</feature>
<feature type="strand" evidence="7">
    <location>
        <begin position="302"/>
        <end position="305"/>
    </location>
</feature>
<feature type="strand" evidence="7">
    <location>
        <begin position="319"/>
        <end position="321"/>
    </location>
</feature>
<feature type="helix" evidence="7">
    <location>
        <begin position="328"/>
        <end position="351"/>
    </location>
</feature>
<feature type="helix" evidence="7">
    <location>
        <begin position="362"/>
        <end position="386"/>
    </location>
</feature>
<feature type="turn" evidence="7">
    <location>
        <begin position="387"/>
        <end position="390"/>
    </location>
</feature>
<feature type="helix" evidence="7">
    <location>
        <begin position="395"/>
        <end position="404"/>
    </location>
</feature>
<feature type="helix" evidence="7">
    <location>
        <begin position="406"/>
        <end position="408"/>
    </location>
</feature>
<feature type="helix" evidence="7">
    <location>
        <begin position="409"/>
        <end position="416"/>
    </location>
</feature>
<feature type="helix" evidence="7">
    <location>
        <begin position="418"/>
        <end position="431"/>
    </location>
</feature>
<feature type="helix" evidence="7">
    <location>
        <begin position="435"/>
        <end position="441"/>
    </location>
</feature>
<feature type="helix" evidence="7">
    <location>
        <begin position="447"/>
        <end position="454"/>
    </location>
</feature>
<gene>
    <name evidence="1" type="primary">fumC</name>
    <name type="ordered locus">RP665</name>
</gene>
<dbReference type="EC" id="4.2.1.2" evidence="1"/>
<dbReference type="EMBL" id="AJ235272">
    <property type="protein sequence ID" value="CAA15103.1"/>
    <property type="molecule type" value="Genomic_DNA"/>
</dbReference>
<dbReference type="PIR" id="E71672">
    <property type="entry name" value="E71672"/>
</dbReference>
<dbReference type="RefSeq" id="NP_221027.1">
    <property type="nucleotide sequence ID" value="NC_000963.1"/>
</dbReference>
<dbReference type="RefSeq" id="WP_004596191.1">
    <property type="nucleotide sequence ID" value="NC_000963.1"/>
</dbReference>
<dbReference type="PDB" id="3GTD">
    <property type="method" value="X-ray"/>
    <property type="resolution" value="2.40 A"/>
    <property type="chains" value="A/B=1-461"/>
</dbReference>
<dbReference type="PDBsum" id="3GTD"/>
<dbReference type="SMR" id="Q9ZCQ4"/>
<dbReference type="STRING" id="272947.gene:17555742"/>
<dbReference type="EnsemblBacteria" id="CAA15103">
    <property type="protein sequence ID" value="CAA15103"/>
    <property type="gene ID" value="CAA15103"/>
</dbReference>
<dbReference type="GeneID" id="57569790"/>
<dbReference type="KEGG" id="rpr:RP665"/>
<dbReference type="PATRIC" id="fig|272947.5.peg.685"/>
<dbReference type="eggNOG" id="COG0114">
    <property type="taxonomic scope" value="Bacteria"/>
</dbReference>
<dbReference type="HOGENOM" id="CLU_021594_4_1_5"/>
<dbReference type="OrthoDB" id="9802809at2"/>
<dbReference type="BRENDA" id="4.2.1.2">
    <property type="organism ID" value="5447"/>
</dbReference>
<dbReference type="UniPathway" id="UPA00223">
    <property type="reaction ID" value="UER01007"/>
</dbReference>
<dbReference type="EvolutionaryTrace" id="Q9ZCQ4"/>
<dbReference type="Proteomes" id="UP000002480">
    <property type="component" value="Chromosome"/>
</dbReference>
<dbReference type="GO" id="GO:0005737">
    <property type="term" value="C:cytoplasm"/>
    <property type="evidence" value="ECO:0007669"/>
    <property type="project" value="UniProtKB-SubCell"/>
</dbReference>
<dbReference type="GO" id="GO:0004333">
    <property type="term" value="F:fumarate hydratase activity"/>
    <property type="evidence" value="ECO:0007669"/>
    <property type="project" value="UniProtKB-UniRule"/>
</dbReference>
<dbReference type="GO" id="GO:0006106">
    <property type="term" value="P:fumarate metabolic process"/>
    <property type="evidence" value="ECO:0007669"/>
    <property type="project" value="InterPro"/>
</dbReference>
<dbReference type="GO" id="GO:0006108">
    <property type="term" value="P:malate metabolic process"/>
    <property type="evidence" value="ECO:0007669"/>
    <property type="project" value="TreeGrafter"/>
</dbReference>
<dbReference type="GO" id="GO:0006099">
    <property type="term" value="P:tricarboxylic acid cycle"/>
    <property type="evidence" value="ECO:0007669"/>
    <property type="project" value="UniProtKB-UniRule"/>
</dbReference>
<dbReference type="CDD" id="cd01362">
    <property type="entry name" value="Fumarase_classII"/>
    <property type="match status" value="1"/>
</dbReference>
<dbReference type="FunFam" id="1.10.40.30:FF:000002">
    <property type="entry name" value="Fumarate hydratase class II"/>
    <property type="match status" value="1"/>
</dbReference>
<dbReference type="FunFam" id="1.10.275.10:FF:000001">
    <property type="entry name" value="Fumarate hydratase, mitochondrial"/>
    <property type="match status" value="1"/>
</dbReference>
<dbReference type="FunFam" id="1.20.200.10:FF:000001">
    <property type="entry name" value="Fumarate hydratase, mitochondrial"/>
    <property type="match status" value="1"/>
</dbReference>
<dbReference type="Gene3D" id="1.10.40.30">
    <property type="entry name" value="Fumarase/aspartase (C-terminal domain)"/>
    <property type="match status" value="1"/>
</dbReference>
<dbReference type="Gene3D" id="1.20.200.10">
    <property type="entry name" value="Fumarase/aspartase (Central domain)"/>
    <property type="match status" value="1"/>
</dbReference>
<dbReference type="Gene3D" id="1.10.275.10">
    <property type="entry name" value="Fumarase/aspartase (N-terminal domain)"/>
    <property type="match status" value="1"/>
</dbReference>
<dbReference type="HAMAP" id="MF_00743">
    <property type="entry name" value="FumaraseC"/>
    <property type="match status" value="1"/>
</dbReference>
<dbReference type="InterPro" id="IPR005677">
    <property type="entry name" value="Fum_hydII"/>
</dbReference>
<dbReference type="InterPro" id="IPR024083">
    <property type="entry name" value="Fumarase/histidase_N"/>
</dbReference>
<dbReference type="InterPro" id="IPR018951">
    <property type="entry name" value="Fumarase_C_C"/>
</dbReference>
<dbReference type="InterPro" id="IPR020557">
    <property type="entry name" value="Fumarate_lyase_CS"/>
</dbReference>
<dbReference type="InterPro" id="IPR000362">
    <property type="entry name" value="Fumarate_lyase_fam"/>
</dbReference>
<dbReference type="InterPro" id="IPR022761">
    <property type="entry name" value="Fumarate_lyase_N"/>
</dbReference>
<dbReference type="InterPro" id="IPR008948">
    <property type="entry name" value="L-Aspartase-like"/>
</dbReference>
<dbReference type="NCBIfam" id="TIGR00979">
    <property type="entry name" value="fumC_II"/>
    <property type="match status" value="1"/>
</dbReference>
<dbReference type="NCBIfam" id="NF008909">
    <property type="entry name" value="PRK12273.1"/>
    <property type="match status" value="1"/>
</dbReference>
<dbReference type="PANTHER" id="PTHR11444">
    <property type="entry name" value="ASPARTATEAMMONIA/ARGININOSUCCINATE/ADENYLOSUCCINATE LYASE"/>
    <property type="match status" value="1"/>
</dbReference>
<dbReference type="PANTHER" id="PTHR11444:SF1">
    <property type="entry name" value="FUMARATE HYDRATASE, MITOCHONDRIAL"/>
    <property type="match status" value="1"/>
</dbReference>
<dbReference type="Pfam" id="PF10415">
    <property type="entry name" value="FumaraseC_C"/>
    <property type="match status" value="1"/>
</dbReference>
<dbReference type="Pfam" id="PF00206">
    <property type="entry name" value="Lyase_1"/>
    <property type="match status" value="1"/>
</dbReference>
<dbReference type="PRINTS" id="PR00145">
    <property type="entry name" value="ARGSUCLYASE"/>
</dbReference>
<dbReference type="PRINTS" id="PR00149">
    <property type="entry name" value="FUMRATELYASE"/>
</dbReference>
<dbReference type="SUPFAM" id="SSF48557">
    <property type="entry name" value="L-aspartase-like"/>
    <property type="match status" value="1"/>
</dbReference>
<dbReference type="PROSITE" id="PS00163">
    <property type="entry name" value="FUMARATE_LYASES"/>
    <property type="match status" value="1"/>
</dbReference>